<gene>
    <name evidence="1" type="primary">wecF</name>
    <name evidence="1" type="synonym">rffT</name>
    <name type="ordered locus">SDY_3955</name>
</gene>
<evidence type="ECO:0000255" key="1">
    <source>
        <dbReference type="HAMAP-Rule" id="MF_01002"/>
    </source>
</evidence>
<dbReference type="EC" id="2.4.1.325" evidence="1"/>
<dbReference type="EMBL" id="CP000034">
    <property type="protein sequence ID" value="ABB63884.1"/>
    <property type="molecule type" value="Genomic_DNA"/>
</dbReference>
<dbReference type="RefSeq" id="WP_000217226.1">
    <property type="nucleotide sequence ID" value="NC_007606.1"/>
</dbReference>
<dbReference type="RefSeq" id="YP_405375.1">
    <property type="nucleotide sequence ID" value="NC_007606.1"/>
</dbReference>
<dbReference type="SMR" id="Q329X1"/>
<dbReference type="STRING" id="300267.SDY_3955"/>
<dbReference type="CAZy" id="GT56">
    <property type="family name" value="Glycosyltransferase Family 56"/>
</dbReference>
<dbReference type="EnsemblBacteria" id="ABB63884">
    <property type="protein sequence ID" value="ABB63884"/>
    <property type="gene ID" value="SDY_3955"/>
</dbReference>
<dbReference type="KEGG" id="sdy:SDY_3955"/>
<dbReference type="PATRIC" id="fig|300267.13.peg.4666"/>
<dbReference type="HOGENOM" id="CLU_066584_0_0_6"/>
<dbReference type="UniPathway" id="UPA00566"/>
<dbReference type="Proteomes" id="UP000002716">
    <property type="component" value="Chromosome"/>
</dbReference>
<dbReference type="GO" id="GO:0005886">
    <property type="term" value="C:plasma membrane"/>
    <property type="evidence" value="ECO:0007669"/>
    <property type="project" value="UniProtKB-SubCell"/>
</dbReference>
<dbReference type="GO" id="GO:0102031">
    <property type="term" value="F:4-acetamido-4,6-dideoxy-D-galactose transferase activity"/>
    <property type="evidence" value="ECO:0007669"/>
    <property type="project" value="UniProtKB-EC"/>
</dbReference>
<dbReference type="GO" id="GO:0008417">
    <property type="term" value="F:fucosyltransferase activity"/>
    <property type="evidence" value="ECO:0007669"/>
    <property type="project" value="InterPro"/>
</dbReference>
<dbReference type="GO" id="GO:0009246">
    <property type="term" value="P:enterobacterial common antigen biosynthetic process"/>
    <property type="evidence" value="ECO:0007669"/>
    <property type="project" value="UniProtKB-UniRule"/>
</dbReference>
<dbReference type="GO" id="GO:0036065">
    <property type="term" value="P:fucosylation"/>
    <property type="evidence" value="ECO:0007669"/>
    <property type="project" value="InterPro"/>
</dbReference>
<dbReference type="HAMAP" id="MF_01002">
    <property type="entry name" value="WecF_RffT"/>
    <property type="match status" value="1"/>
</dbReference>
<dbReference type="InterPro" id="IPR009993">
    <property type="entry name" value="WecF"/>
</dbReference>
<dbReference type="NCBIfam" id="NF002752">
    <property type="entry name" value="PRK02797.1-1"/>
    <property type="match status" value="1"/>
</dbReference>
<dbReference type="NCBIfam" id="NF002753">
    <property type="entry name" value="PRK02797.1-2"/>
    <property type="match status" value="1"/>
</dbReference>
<dbReference type="NCBIfam" id="NF002754">
    <property type="entry name" value="PRK02797.1-3"/>
    <property type="match status" value="1"/>
</dbReference>
<dbReference type="Pfam" id="PF07429">
    <property type="entry name" value="Glyco_transf_56"/>
    <property type="match status" value="1"/>
</dbReference>
<comment type="function">
    <text evidence="1">Catalyzes the synthesis of Und-PP-GlcNAc-ManNAcA-Fuc4NAc (Lipid III), the third lipid-linked intermediate involved in ECA synthesis.</text>
</comment>
<comment type="catalytic activity">
    <reaction evidence="1">
        <text>beta-D-ManNAcA-(1-&gt;4)-alpha-D-GlcNAc-di-trans,octa-cis-undecaprenyl diphosphate + dTDP-4-acetamido-4,6-dideoxy-alpha-D-galactose = alpha-D-FucNAc4-(1-&gt;4)-beta-D-ManNAcA-(1-&gt;4)-D-GlcNAc-undecaprenyl diphosphate + dTDP + H(+)</text>
        <dbReference type="Rhea" id="RHEA:28759"/>
        <dbReference type="ChEBI" id="CHEBI:15378"/>
        <dbReference type="ChEBI" id="CHEBI:58369"/>
        <dbReference type="ChEBI" id="CHEBI:61495"/>
        <dbReference type="ChEBI" id="CHEBI:61496"/>
        <dbReference type="ChEBI" id="CHEBI:68493"/>
        <dbReference type="EC" id="2.4.1.325"/>
    </reaction>
</comment>
<comment type="pathway">
    <text evidence="1">Bacterial outer membrane biogenesis; enterobacterial common antigen biosynthesis.</text>
</comment>
<comment type="subcellular location">
    <subcellularLocation>
        <location evidence="1">Cell inner membrane</location>
        <topology evidence="1">Peripheral membrane protein</topology>
    </subcellularLocation>
</comment>
<comment type="similarity">
    <text evidence="1">Belongs to the glycosyltransferase 56 family.</text>
</comment>
<accession>Q329X1</accession>
<name>WECF_SHIDS</name>
<keyword id="KW-0997">Cell inner membrane</keyword>
<keyword id="KW-1003">Cell membrane</keyword>
<keyword id="KW-0328">Glycosyltransferase</keyword>
<keyword id="KW-0472">Membrane</keyword>
<keyword id="KW-1185">Reference proteome</keyword>
<keyword id="KW-0808">Transferase</keyword>
<organism>
    <name type="scientific">Shigella dysenteriae serotype 1 (strain Sd197)</name>
    <dbReference type="NCBI Taxonomy" id="300267"/>
    <lineage>
        <taxon>Bacteria</taxon>
        <taxon>Pseudomonadati</taxon>
        <taxon>Pseudomonadota</taxon>
        <taxon>Gammaproteobacteria</taxon>
        <taxon>Enterobacterales</taxon>
        <taxon>Enterobacteriaceae</taxon>
        <taxon>Shigella</taxon>
    </lineage>
</organism>
<sequence length="359" mass="40553">MTVLIHVLGSDIPHHNRTVLRFFNDALAATSEHAREFMVVGKDDGLSDSCPALSVQFFPGKKSLAEAVIAKAKANRQQRFFFHGQFNPKLWLALLSGGIKSRQFFWHIWGADLYELSSGLIYKLFYPLRRLAQKRVGCVFATRGDLSFFAKTHPKVRGELLYFPTRMDPSLNTLANDRQREGKMTILVGNSGDRSNEHVAALRAVHQQFGDTVKVVVPMGYPPNNEAYIEEVRQAGLELFSEENLQVLSEKLEFDAYLALLRQCDLGYFIFARQQGIGTLCLLIQAGIPCVLNRENPFWQDMTEQHLPVLFTTDDLNEDIVREAQRQLASVDKNTIAFFSPNYLQGWQRALAIAAGEVA</sequence>
<proteinExistence type="inferred from homology"/>
<protein>
    <recommendedName>
        <fullName evidence="1">TDP-N-acetylfucosamine:lipid II N-acetylfucosaminyltransferase</fullName>
        <ecNumber evidence="1">2.4.1.325</ecNumber>
    </recommendedName>
    <alternativeName>
        <fullName evidence="1">4-alpha-L-fucosyltransferase</fullName>
    </alternativeName>
    <alternativeName>
        <fullName evidence="1">TDP-Fuc4NAc:lipid II Fuc4NAc transferase</fullName>
        <shortName evidence="1">Fuc4NAc transferase</shortName>
    </alternativeName>
</protein>
<feature type="chain" id="PRO_1000062747" description="TDP-N-acetylfucosamine:lipid II N-acetylfucosaminyltransferase">
    <location>
        <begin position="1"/>
        <end position="359"/>
    </location>
</feature>
<reference key="1">
    <citation type="journal article" date="2005" name="Nucleic Acids Res.">
        <title>Genome dynamics and diversity of Shigella species, the etiologic agents of bacillary dysentery.</title>
        <authorList>
            <person name="Yang F."/>
            <person name="Yang J."/>
            <person name="Zhang X."/>
            <person name="Chen L."/>
            <person name="Jiang Y."/>
            <person name="Yan Y."/>
            <person name="Tang X."/>
            <person name="Wang J."/>
            <person name="Xiong Z."/>
            <person name="Dong J."/>
            <person name="Xue Y."/>
            <person name="Zhu Y."/>
            <person name="Xu X."/>
            <person name="Sun L."/>
            <person name="Chen S."/>
            <person name="Nie H."/>
            <person name="Peng J."/>
            <person name="Xu J."/>
            <person name="Wang Y."/>
            <person name="Yuan Z."/>
            <person name="Wen Y."/>
            <person name="Yao Z."/>
            <person name="Shen Y."/>
            <person name="Qiang B."/>
            <person name="Hou Y."/>
            <person name="Yu J."/>
            <person name="Jin Q."/>
        </authorList>
    </citation>
    <scope>NUCLEOTIDE SEQUENCE [LARGE SCALE GENOMIC DNA]</scope>
    <source>
        <strain>Sd197</strain>
    </source>
</reference>